<sequence>MKNIVLGGGCFWCVEAVFERLKGVIDTEVGYSGGNPNPSYESVCNGDGNIEVVKINYDEKQISLLEILTLFFKIHDPTSIDKQGGDIGIQYRSIIFYENEEDKILAQNFIEEQQKIFSKKIVTKISRLQTYYKAENYHQHYFINNPNQGYCQAVIAPKLQKIQSD</sequence>
<feature type="chain" id="PRO_1000068315" description="Peptide methionine sulfoxide reductase MsrA">
    <location>
        <begin position="1"/>
        <end position="165"/>
    </location>
</feature>
<feature type="active site" evidence="1">
    <location>
        <position position="10"/>
    </location>
</feature>
<gene>
    <name evidence="1" type="primary">msrA</name>
    <name type="ordered locus">CJJ81176_0665</name>
</gene>
<reference key="1">
    <citation type="submission" date="2006-12" db="EMBL/GenBank/DDBJ databases">
        <authorList>
            <person name="Fouts D.E."/>
            <person name="Nelson K.E."/>
            <person name="Sebastian Y."/>
        </authorList>
    </citation>
    <scope>NUCLEOTIDE SEQUENCE [LARGE SCALE GENOMIC DNA]</scope>
    <source>
        <strain>81-176</strain>
    </source>
</reference>
<accession>A1VYZ7</accession>
<proteinExistence type="inferred from homology"/>
<organism>
    <name type="scientific">Campylobacter jejuni subsp. jejuni serotype O:23/36 (strain 81-176)</name>
    <dbReference type="NCBI Taxonomy" id="354242"/>
    <lineage>
        <taxon>Bacteria</taxon>
        <taxon>Pseudomonadati</taxon>
        <taxon>Campylobacterota</taxon>
        <taxon>Epsilonproteobacteria</taxon>
        <taxon>Campylobacterales</taxon>
        <taxon>Campylobacteraceae</taxon>
        <taxon>Campylobacter</taxon>
    </lineage>
</organism>
<protein>
    <recommendedName>
        <fullName evidence="1">Peptide methionine sulfoxide reductase MsrA</fullName>
        <shortName evidence="1">Protein-methionine-S-oxide reductase</shortName>
        <ecNumber evidence="1">1.8.4.11</ecNumber>
    </recommendedName>
    <alternativeName>
        <fullName evidence="1">Peptide-methionine (S)-S-oxide reductase</fullName>
        <shortName evidence="1">Peptide Met(O) reductase</shortName>
    </alternativeName>
</protein>
<evidence type="ECO:0000255" key="1">
    <source>
        <dbReference type="HAMAP-Rule" id="MF_01401"/>
    </source>
</evidence>
<name>MSRA_CAMJJ</name>
<comment type="function">
    <text evidence="1">Has an important function as a repair enzyme for proteins that have been inactivated by oxidation. Catalyzes the reversible oxidation-reduction of methionine sulfoxide in proteins to methionine.</text>
</comment>
<comment type="catalytic activity">
    <reaction evidence="1">
        <text>L-methionyl-[protein] + [thioredoxin]-disulfide + H2O = L-methionyl-(S)-S-oxide-[protein] + [thioredoxin]-dithiol</text>
        <dbReference type="Rhea" id="RHEA:14217"/>
        <dbReference type="Rhea" id="RHEA-COMP:10698"/>
        <dbReference type="Rhea" id="RHEA-COMP:10700"/>
        <dbReference type="Rhea" id="RHEA-COMP:12313"/>
        <dbReference type="Rhea" id="RHEA-COMP:12315"/>
        <dbReference type="ChEBI" id="CHEBI:15377"/>
        <dbReference type="ChEBI" id="CHEBI:16044"/>
        <dbReference type="ChEBI" id="CHEBI:29950"/>
        <dbReference type="ChEBI" id="CHEBI:44120"/>
        <dbReference type="ChEBI" id="CHEBI:50058"/>
        <dbReference type="EC" id="1.8.4.11"/>
    </reaction>
</comment>
<comment type="catalytic activity">
    <reaction evidence="1">
        <text>[thioredoxin]-disulfide + L-methionine + H2O = L-methionine (S)-S-oxide + [thioredoxin]-dithiol</text>
        <dbReference type="Rhea" id="RHEA:19993"/>
        <dbReference type="Rhea" id="RHEA-COMP:10698"/>
        <dbReference type="Rhea" id="RHEA-COMP:10700"/>
        <dbReference type="ChEBI" id="CHEBI:15377"/>
        <dbReference type="ChEBI" id="CHEBI:29950"/>
        <dbReference type="ChEBI" id="CHEBI:50058"/>
        <dbReference type="ChEBI" id="CHEBI:57844"/>
        <dbReference type="ChEBI" id="CHEBI:58772"/>
        <dbReference type="EC" id="1.8.4.11"/>
    </reaction>
</comment>
<comment type="similarity">
    <text evidence="1">Belongs to the MsrA Met sulfoxide reductase family.</text>
</comment>
<dbReference type="EC" id="1.8.4.11" evidence="1"/>
<dbReference type="EMBL" id="CP000538">
    <property type="protein sequence ID" value="EAQ73147.1"/>
    <property type="molecule type" value="Genomic_DNA"/>
</dbReference>
<dbReference type="RefSeq" id="WP_002855174.1">
    <property type="nucleotide sequence ID" value="NC_008787.1"/>
</dbReference>
<dbReference type="SMR" id="A1VYZ7"/>
<dbReference type="KEGG" id="cjj:CJJ81176_0665"/>
<dbReference type="eggNOG" id="COG0225">
    <property type="taxonomic scope" value="Bacteria"/>
</dbReference>
<dbReference type="HOGENOM" id="CLU_031040_10_0_7"/>
<dbReference type="Proteomes" id="UP000000646">
    <property type="component" value="Chromosome"/>
</dbReference>
<dbReference type="GO" id="GO:0033744">
    <property type="term" value="F:L-methionine:thioredoxin-disulfide S-oxidoreductase activity"/>
    <property type="evidence" value="ECO:0007669"/>
    <property type="project" value="RHEA"/>
</dbReference>
<dbReference type="GO" id="GO:0008113">
    <property type="term" value="F:peptide-methionine (S)-S-oxide reductase activity"/>
    <property type="evidence" value="ECO:0007669"/>
    <property type="project" value="UniProtKB-UniRule"/>
</dbReference>
<dbReference type="GO" id="GO:0036211">
    <property type="term" value="P:protein modification process"/>
    <property type="evidence" value="ECO:0007669"/>
    <property type="project" value="UniProtKB-UniRule"/>
</dbReference>
<dbReference type="Gene3D" id="3.30.1060.10">
    <property type="entry name" value="Peptide methionine sulphoxide reductase MsrA"/>
    <property type="match status" value="1"/>
</dbReference>
<dbReference type="HAMAP" id="MF_01401">
    <property type="entry name" value="MsrA"/>
    <property type="match status" value="1"/>
</dbReference>
<dbReference type="InterPro" id="IPR002569">
    <property type="entry name" value="Met_Sox_Rdtase_MsrA_dom"/>
</dbReference>
<dbReference type="InterPro" id="IPR036509">
    <property type="entry name" value="Met_Sox_Rdtase_MsrA_sf"/>
</dbReference>
<dbReference type="NCBIfam" id="TIGR00401">
    <property type="entry name" value="msrA"/>
    <property type="match status" value="1"/>
</dbReference>
<dbReference type="PANTHER" id="PTHR43774">
    <property type="entry name" value="PEPTIDE METHIONINE SULFOXIDE REDUCTASE"/>
    <property type="match status" value="1"/>
</dbReference>
<dbReference type="PANTHER" id="PTHR43774:SF1">
    <property type="entry name" value="PEPTIDE METHIONINE SULFOXIDE REDUCTASE MSRA 2"/>
    <property type="match status" value="1"/>
</dbReference>
<dbReference type="Pfam" id="PF01625">
    <property type="entry name" value="PMSR"/>
    <property type="match status" value="1"/>
</dbReference>
<dbReference type="SUPFAM" id="SSF55068">
    <property type="entry name" value="Peptide methionine sulfoxide reductase"/>
    <property type="match status" value="1"/>
</dbReference>
<keyword id="KW-0560">Oxidoreductase</keyword>